<comment type="function">
    <text evidence="1">Produces ATP from ADP in the presence of a proton gradient across the membrane.</text>
</comment>
<comment type="similarity">
    <text evidence="1">Belongs to the V-ATPase D subunit family.</text>
</comment>
<keyword id="KW-0066">ATP synthesis</keyword>
<keyword id="KW-0375">Hydrogen ion transport</keyword>
<keyword id="KW-0406">Ion transport</keyword>
<keyword id="KW-0813">Transport</keyword>
<sequence length="203" mass="23182">MSSQIKLTKNSYRAEKQKLNMLGMYLPTLKLKKALLQAEVQSAIRLAAESTATNEQARDRMYAFAELFSIPLYTDAVEQCFSVDILEKDVENIAGVEVPLLKRVVLTSPEYSLLDTPIWLDSLLASVKEYVVSKIYAENAQERLLLLEEELRRVSIRVNLFEKKLIPTTSQTLKKIAIFLSDRSITDVGQMKMAKKKIQQHKE</sequence>
<organism>
    <name type="scientific">Chlamydia trachomatis serovar L2 (strain ATCC VR-902B / DSM 19102 / 434/Bu)</name>
    <dbReference type="NCBI Taxonomy" id="471472"/>
    <lineage>
        <taxon>Bacteria</taxon>
        <taxon>Pseudomonadati</taxon>
        <taxon>Chlamydiota</taxon>
        <taxon>Chlamydiia</taxon>
        <taxon>Chlamydiales</taxon>
        <taxon>Chlamydiaceae</taxon>
        <taxon>Chlamydia/Chlamydophila group</taxon>
        <taxon>Chlamydia</taxon>
    </lineage>
</organism>
<proteinExistence type="inferred from homology"/>
<protein>
    <recommendedName>
        <fullName evidence="1">V-type ATP synthase subunit D</fullName>
    </recommendedName>
    <alternativeName>
        <fullName evidence="1">V-ATPase subunit D</fullName>
    </alternativeName>
</protein>
<name>VATD_CHLT2</name>
<accession>B0B7M2</accession>
<gene>
    <name evidence="1" type="primary">atpD</name>
    <name type="ordered locus">CTL0558</name>
</gene>
<dbReference type="EMBL" id="AM884176">
    <property type="protein sequence ID" value="CAP03998.1"/>
    <property type="molecule type" value="Genomic_DNA"/>
</dbReference>
<dbReference type="RefSeq" id="WP_009871653.1">
    <property type="nucleotide sequence ID" value="NC_010287.1"/>
</dbReference>
<dbReference type="RefSeq" id="YP_001654634.1">
    <property type="nucleotide sequence ID" value="NC_010287.1"/>
</dbReference>
<dbReference type="SMR" id="B0B7M2"/>
<dbReference type="KEGG" id="ctb:CTL0558"/>
<dbReference type="PATRIC" id="fig|471472.4.peg.599"/>
<dbReference type="HOGENOM" id="CLU_113661_0_0_0"/>
<dbReference type="Proteomes" id="UP001154402">
    <property type="component" value="Chromosome"/>
</dbReference>
<dbReference type="GO" id="GO:0005524">
    <property type="term" value="F:ATP binding"/>
    <property type="evidence" value="ECO:0007669"/>
    <property type="project" value="UniProtKB-UniRule"/>
</dbReference>
<dbReference type="GO" id="GO:0046933">
    <property type="term" value="F:proton-transporting ATP synthase activity, rotational mechanism"/>
    <property type="evidence" value="ECO:0007669"/>
    <property type="project" value="UniProtKB-UniRule"/>
</dbReference>
<dbReference type="GO" id="GO:0046961">
    <property type="term" value="F:proton-transporting ATPase activity, rotational mechanism"/>
    <property type="evidence" value="ECO:0007669"/>
    <property type="project" value="InterPro"/>
</dbReference>
<dbReference type="GO" id="GO:0042777">
    <property type="term" value="P:proton motive force-driven plasma membrane ATP synthesis"/>
    <property type="evidence" value="ECO:0007669"/>
    <property type="project" value="UniProtKB-UniRule"/>
</dbReference>
<dbReference type="FunFam" id="1.10.287.3240:FF:000014">
    <property type="entry name" value="V-type ATP synthase subunit D"/>
    <property type="match status" value="1"/>
</dbReference>
<dbReference type="Gene3D" id="1.10.287.3240">
    <property type="match status" value="1"/>
</dbReference>
<dbReference type="HAMAP" id="MF_00271">
    <property type="entry name" value="ATP_synth_D_arch"/>
    <property type="match status" value="1"/>
</dbReference>
<dbReference type="InterPro" id="IPR002699">
    <property type="entry name" value="V_ATPase_D"/>
</dbReference>
<dbReference type="NCBIfam" id="NF002565">
    <property type="entry name" value="PRK02195.1"/>
    <property type="match status" value="1"/>
</dbReference>
<dbReference type="NCBIfam" id="TIGR00309">
    <property type="entry name" value="V_ATPase_subD"/>
    <property type="match status" value="1"/>
</dbReference>
<dbReference type="PANTHER" id="PTHR11671">
    <property type="entry name" value="V-TYPE ATP SYNTHASE SUBUNIT D"/>
    <property type="match status" value="1"/>
</dbReference>
<dbReference type="Pfam" id="PF01813">
    <property type="entry name" value="ATP-synt_D"/>
    <property type="match status" value="1"/>
</dbReference>
<evidence type="ECO:0000255" key="1">
    <source>
        <dbReference type="HAMAP-Rule" id="MF_00271"/>
    </source>
</evidence>
<reference key="1">
    <citation type="journal article" date="2008" name="Genome Res.">
        <title>Chlamydia trachomatis: genome sequence analysis of lymphogranuloma venereum isolates.</title>
        <authorList>
            <person name="Thomson N.R."/>
            <person name="Holden M.T.G."/>
            <person name="Carder C."/>
            <person name="Lennard N."/>
            <person name="Lockey S.J."/>
            <person name="Marsh P."/>
            <person name="Skipp P."/>
            <person name="O'Connor C.D."/>
            <person name="Goodhead I."/>
            <person name="Norbertzcak H."/>
            <person name="Harris B."/>
            <person name="Ormond D."/>
            <person name="Rance R."/>
            <person name="Quail M.A."/>
            <person name="Parkhill J."/>
            <person name="Stephens R.S."/>
            <person name="Clarke I.N."/>
        </authorList>
    </citation>
    <scope>NUCLEOTIDE SEQUENCE [LARGE SCALE GENOMIC DNA]</scope>
    <source>
        <strain>ATCC VR-902B / DSM 19102 / 434/Bu</strain>
    </source>
</reference>
<feature type="chain" id="PRO_1000114474" description="V-type ATP synthase subunit D">
    <location>
        <begin position="1"/>
        <end position="203"/>
    </location>
</feature>